<accession>A4G8R0</accession>
<organism>
    <name type="scientific">Herminiimonas arsenicoxydans</name>
    <dbReference type="NCBI Taxonomy" id="204773"/>
    <lineage>
        <taxon>Bacteria</taxon>
        <taxon>Pseudomonadati</taxon>
        <taxon>Pseudomonadota</taxon>
        <taxon>Betaproteobacteria</taxon>
        <taxon>Burkholderiales</taxon>
        <taxon>Oxalobacteraceae</taxon>
        <taxon>Herminiimonas</taxon>
    </lineage>
</organism>
<proteinExistence type="inferred from homology"/>
<gene>
    <name evidence="1" type="primary">proS</name>
    <name type="ordered locus">HEAR2781</name>
</gene>
<keyword id="KW-0030">Aminoacyl-tRNA synthetase</keyword>
<keyword id="KW-0067">ATP-binding</keyword>
<keyword id="KW-0963">Cytoplasm</keyword>
<keyword id="KW-0436">Ligase</keyword>
<keyword id="KW-0547">Nucleotide-binding</keyword>
<keyword id="KW-0648">Protein biosynthesis</keyword>
<keyword id="KW-1185">Reference proteome</keyword>
<name>SYP_HERAR</name>
<feature type="chain" id="PRO_1000069145" description="Proline--tRNA ligase">
    <location>
        <begin position="1"/>
        <end position="577"/>
    </location>
</feature>
<sequence length="577" mass="64009">MRASRFFISTLKEAPSDAEIVSHKLMMRAGMIKRLGSGIYTYMPIGLRVIRKVEAIVREEMNRAHAIELLMPLVQPAELWQETGRWDKMGPELMRVKDRHGREYAIQPTSEEVVTDVVRSEIKSYRQLPLNFYHIQTKFRDERRPRFGLMRGREFTMKDAYSFDRDAEGLKRSYQIMFDAYVKIFNRFGLQFRAVAADNGAIGGSGSHEFHVIADTGEDAIVYCPTSDYAANMEAAEAIAPAVPRAAATQTLTKTATPGKAKCEDVAALLNLPLAQTVKSIVLTVEKEDKGVVSKEIWLLLLRGDHELNEVKAAKIPGLTDYRFANEAEIVEWFGTPPGYLGPINTKKPVKVVVDRTVAAMSDFVCGANEVDFHFTGVNWGRDLPEAMVLDLRNVVEGDPSPDGKGVLAIQRGIEVGHVFQLGTAYSEKMKATYLDENGKPQLIQMGCYGIGVTRIVGAAIEQNFDDRGIIWPAALAPFEVVLCPMGYDRSESVKTETDKLYEALLAAGVDVILDDRGERPGAMFADWELIGAPHRIVIGERGLKEGALEYKGRRDADATAVALDDMLAFVQARLAA</sequence>
<reference key="1">
    <citation type="journal article" date="2007" name="PLoS Genet.">
        <title>A tale of two oxidation states: bacterial colonization of arsenic-rich environments.</title>
        <authorList>
            <person name="Muller D."/>
            <person name="Medigue C."/>
            <person name="Koechler S."/>
            <person name="Barbe V."/>
            <person name="Barakat M."/>
            <person name="Talla E."/>
            <person name="Bonnefoy V."/>
            <person name="Krin E."/>
            <person name="Arsene-Ploetze F."/>
            <person name="Carapito C."/>
            <person name="Chandler M."/>
            <person name="Cournoyer B."/>
            <person name="Cruveiller S."/>
            <person name="Dossat C."/>
            <person name="Duval S."/>
            <person name="Heymann M."/>
            <person name="Leize E."/>
            <person name="Lieutaud A."/>
            <person name="Lievremont D."/>
            <person name="Makita Y."/>
            <person name="Mangenot S."/>
            <person name="Nitschke W."/>
            <person name="Ortet P."/>
            <person name="Perdrial N."/>
            <person name="Schoepp B."/>
            <person name="Siguier P."/>
            <person name="Simeonova D.D."/>
            <person name="Rouy Z."/>
            <person name="Segurens B."/>
            <person name="Turlin E."/>
            <person name="Vallenet D."/>
            <person name="van Dorsselaer A."/>
            <person name="Weiss S."/>
            <person name="Weissenbach J."/>
            <person name="Lett M.-C."/>
            <person name="Danchin A."/>
            <person name="Bertin P.N."/>
        </authorList>
    </citation>
    <scope>NUCLEOTIDE SEQUENCE [LARGE SCALE GENOMIC DNA]</scope>
    <source>
        <strain>ULPAs1</strain>
    </source>
</reference>
<comment type="function">
    <text evidence="1">Catalyzes the attachment of proline to tRNA(Pro) in a two-step reaction: proline is first activated by ATP to form Pro-AMP and then transferred to the acceptor end of tRNA(Pro). As ProRS can inadvertently accommodate and process non-cognate amino acids such as alanine and cysteine, to avoid such errors it has two additional distinct editing activities against alanine. One activity is designated as 'pretransfer' editing and involves the tRNA(Pro)-independent hydrolysis of activated Ala-AMP. The other activity is designated 'posttransfer' editing and involves deacylation of mischarged Ala-tRNA(Pro). The misacylated Cys-tRNA(Pro) is not edited by ProRS.</text>
</comment>
<comment type="catalytic activity">
    <reaction evidence="1">
        <text>tRNA(Pro) + L-proline + ATP = L-prolyl-tRNA(Pro) + AMP + diphosphate</text>
        <dbReference type="Rhea" id="RHEA:14305"/>
        <dbReference type="Rhea" id="RHEA-COMP:9700"/>
        <dbReference type="Rhea" id="RHEA-COMP:9702"/>
        <dbReference type="ChEBI" id="CHEBI:30616"/>
        <dbReference type="ChEBI" id="CHEBI:33019"/>
        <dbReference type="ChEBI" id="CHEBI:60039"/>
        <dbReference type="ChEBI" id="CHEBI:78442"/>
        <dbReference type="ChEBI" id="CHEBI:78532"/>
        <dbReference type="ChEBI" id="CHEBI:456215"/>
        <dbReference type="EC" id="6.1.1.15"/>
    </reaction>
</comment>
<comment type="subunit">
    <text evidence="1">Homodimer.</text>
</comment>
<comment type="subcellular location">
    <subcellularLocation>
        <location evidence="1">Cytoplasm</location>
    </subcellularLocation>
</comment>
<comment type="domain">
    <text evidence="1">Consists of three domains: the N-terminal catalytic domain, the editing domain and the C-terminal anticodon-binding domain.</text>
</comment>
<comment type="similarity">
    <text evidence="1">Belongs to the class-II aminoacyl-tRNA synthetase family. ProS type 1 subfamily.</text>
</comment>
<protein>
    <recommendedName>
        <fullName evidence="1">Proline--tRNA ligase</fullName>
        <ecNumber evidence="1">6.1.1.15</ecNumber>
    </recommendedName>
    <alternativeName>
        <fullName evidence="1">Prolyl-tRNA synthetase</fullName>
        <shortName evidence="1">ProRS</shortName>
    </alternativeName>
</protein>
<evidence type="ECO:0000255" key="1">
    <source>
        <dbReference type="HAMAP-Rule" id="MF_01569"/>
    </source>
</evidence>
<dbReference type="EC" id="6.1.1.15" evidence="1"/>
<dbReference type="EMBL" id="CU207211">
    <property type="protein sequence ID" value="CAL62897.1"/>
    <property type="molecule type" value="Genomic_DNA"/>
</dbReference>
<dbReference type="SMR" id="A4G8R0"/>
<dbReference type="STRING" id="204773.HEAR2781"/>
<dbReference type="KEGG" id="har:HEAR2781"/>
<dbReference type="eggNOG" id="COG0442">
    <property type="taxonomic scope" value="Bacteria"/>
</dbReference>
<dbReference type="HOGENOM" id="CLU_016739_0_0_4"/>
<dbReference type="OrthoDB" id="9809052at2"/>
<dbReference type="Proteomes" id="UP000006697">
    <property type="component" value="Chromosome"/>
</dbReference>
<dbReference type="GO" id="GO:0005829">
    <property type="term" value="C:cytosol"/>
    <property type="evidence" value="ECO:0007669"/>
    <property type="project" value="TreeGrafter"/>
</dbReference>
<dbReference type="GO" id="GO:0002161">
    <property type="term" value="F:aminoacyl-tRNA deacylase activity"/>
    <property type="evidence" value="ECO:0007669"/>
    <property type="project" value="InterPro"/>
</dbReference>
<dbReference type="GO" id="GO:0005524">
    <property type="term" value="F:ATP binding"/>
    <property type="evidence" value="ECO:0007669"/>
    <property type="project" value="UniProtKB-UniRule"/>
</dbReference>
<dbReference type="GO" id="GO:0004827">
    <property type="term" value="F:proline-tRNA ligase activity"/>
    <property type="evidence" value="ECO:0007669"/>
    <property type="project" value="UniProtKB-UniRule"/>
</dbReference>
<dbReference type="GO" id="GO:0006433">
    <property type="term" value="P:prolyl-tRNA aminoacylation"/>
    <property type="evidence" value="ECO:0007669"/>
    <property type="project" value="UniProtKB-UniRule"/>
</dbReference>
<dbReference type="CDD" id="cd04334">
    <property type="entry name" value="ProRS-INS"/>
    <property type="match status" value="1"/>
</dbReference>
<dbReference type="CDD" id="cd00861">
    <property type="entry name" value="ProRS_anticodon_short"/>
    <property type="match status" value="1"/>
</dbReference>
<dbReference type="CDD" id="cd00779">
    <property type="entry name" value="ProRS_core_prok"/>
    <property type="match status" value="1"/>
</dbReference>
<dbReference type="FunFam" id="3.30.930.10:FF:000012">
    <property type="entry name" value="Proline--tRNA ligase"/>
    <property type="match status" value="1"/>
</dbReference>
<dbReference type="FunFam" id="3.30.930.10:FF:000097">
    <property type="entry name" value="Proline--tRNA ligase"/>
    <property type="match status" value="1"/>
</dbReference>
<dbReference type="Gene3D" id="3.40.50.800">
    <property type="entry name" value="Anticodon-binding domain"/>
    <property type="match status" value="1"/>
</dbReference>
<dbReference type="Gene3D" id="3.30.930.10">
    <property type="entry name" value="Bira Bifunctional Protein, Domain 2"/>
    <property type="match status" value="2"/>
</dbReference>
<dbReference type="Gene3D" id="3.90.960.10">
    <property type="entry name" value="YbaK/aminoacyl-tRNA synthetase-associated domain"/>
    <property type="match status" value="1"/>
</dbReference>
<dbReference type="HAMAP" id="MF_01569">
    <property type="entry name" value="Pro_tRNA_synth_type1"/>
    <property type="match status" value="1"/>
</dbReference>
<dbReference type="InterPro" id="IPR002314">
    <property type="entry name" value="aa-tRNA-synt_IIb"/>
</dbReference>
<dbReference type="InterPro" id="IPR006195">
    <property type="entry name" value="aa-tRNA-synth_II"/>
</dbReference>
<dbReference type="InterPro" id="IPR045864">
    <property type="entry name" value="aa-tRNA-synth_II/BPL/LPL"/>
</dbReference>
<dbReference type="InterPro" id="IPR004154">
    <property type="entry name" value="Anticodon-bd"/>
</dbReference>
<dbReference type="InterPro" id="IPR036621">
    <property type="entry name" value="Anticodon-bd_dom_sf"/>
</dbReference>
<dbReference type="InterPro" id="IPR002316">
    <property type="entry name" value="Pro-tRNA-ligase_IIa"/>
</dbReference>
<dbReference type="InterPro" id="IPR004500">
    <property type="entry name" value="Pro-tRNA-synth_IIa_bac-type"/>
</dbReference>
<dbReference type="InterPro" id="IPR023717">
    <property type="entry name" value="Pro-tRNA-Synthase_IIa_type1"/>
</dbReference>
<dbReference type="InterPro" id="IPR050062">
    <property type="entry name" value="Pro-tRNA_synthetase"/>
</dbReference>
<dbReference type="InterPro" id="IPR044140">
    <property type="entry name" value="ProRS_anticodon_short"/>
</dbReference>
<dbReference type="InterPro" id="IPR033730">
    <property type="entry name" value="ProRS_core_prok"/>
</dbReference>
<dbReference type="InterPro" id="IPR036754">
    <property type="entry name" value="YbaK/aa-tRNA-synt-asso_dom_sf"/>
</dbReference>
<dbReference type="InterPro" id="IPR007214">
    <property type="entry name" value="YbaK/aa-tRNA-synth-assoc-dom"/>
</dbReference>
<dbReference type="NCBIfam" id="NF006625">
    <property type="entry name" value="PRK09194.1"/>
    <property type="match status" value="1"/>
</dbReference>
<dbReference type="NCBIfam" id="TIGR00409">
    <property type="entry name" value="proS_fam_II"/>
    <property type="match status" value="1"/>
</dbReference>
<dbReference type="PANTHER" id="PTHR42753">
    <property type="entry name" value="MITOCHONDRIAL RIBOSOME PROTEIN L39/PROLYL-TRNA LIGASE FAMILY MEMBER"/>
    <property type="match status" value="1"/>
</dbReference>
<dbReference type="PANTHER" id="PTHR42753:SF2">
    <property type="entry name" value="PROLINE--TRNA LIGASE"/>
    <property type="match status" value="1"/>
</dbReference>
<dbReference type="Pfam" id="PF03129">
    <property type="entry name" value="HGTP_anticodon"/>
    <property type="match status" value="1"/>
</dbReference>
<dbReference type="Pfam" id="PF00587">
    <property type="entry name" value="tRNA-synt_2b"/>
    <property type="match status" value="1"/>
</dbReference>
<dbReference type="Pfam" id="PF04073">
    <property type="entry name" value="tRNA_edit"/>
    <property type="match status" value="1"/>
</dbReference>
<dbReference type="PIRSF" id="PIRSF001535">
    <property type="entry name" value="ProRS_1"/>
    <property type="match status" value="1"/>
</dbReference>
<dbReference type="PRINTS" id="PR01046">
    <property type="entry name" value="TRNASYNTHPRO"/>
</dbReference>
<dbReference type="SUPFAM" id="SSF52954">
    <property type="entry name" value="Class II aaRS ABD-related"/>
    <property type="match status" value="1"/>
</dbReference>
<dbReference type="SUPFAM" id="SSF55681">
    <property type="entry name" value="Class II aaRS and biotin synthetases"/>
    <property type="match status" value="1"/>
</dbReference>
<dbReference type="SUPFAM" id="SSF55826">
    <property type="entry name" value="YbaK/ProRS associated domain"/>
    <property type="match status" value="1"/>
</dbReference>
<dbReference type="PROSITE" id="PS50862">
    <property type="entry name" value="AA_TRNA_LIGASE_II"/>
    <property type="match status" value="1"/>
</dbReference>